<organism>
    <name type="scientific">Salmonella agona (strain SL483)</name>
    <dbReference type="NCBI Taxonomy" id="454166"/>
    <lineage>
        <taxon>Bacteria</taxon>
        <taxon>Pseudomonadati</taxon>
        <taxon>Pseudomonadota</taxon>
        <taxon>Gammaproteobacteria</taxon>
        <taxon>Enterobacterales</taxon>
        <taxon>Enterobacteriaceae</taxon>
        <taxon>Salmonella</taxon>
    </lineage>
</organism>
<keyword id="KW-0240">DNA-directed RNA polymerase</keyword>
<keyword id="KW-0548">Nucleotidyltransferase</keyword>
<keyword id="KW-0804">Transcription</keyword>
<keyword id="KW-0808">Transferase</keyword>
<sequence length="91" mass="10237">MARVTVQDAVEKIGNRFDLVLVAARRARQMQVGGKDPLVPEENDKTTVIALREIEEGLINNQILDVRERQEQQEQEAAELQAVTAIAEGRR</sequence>
<dbReference type="EC" id="2.7.7.6" evidence="1"/>
<dbReference type="EMBL" id="CP001138">
    <property type="protein sequence ID" value="ACH52089.1"/>
    <property type="molecule type" value="Genomic_DNA"/>
</dbReference>
<dbReference type="RefSeq" id="WP_000135058.1">
    <property type="nucleotide sequence ID" value="NC_011149.1"/>
</dbReference>
<dbReference type="SMR" id="B5EY10"/>
<dbReference type="GeneID" id="98390719"/>
<dbReference type="KEGG" id="sea:SeAg_B3958"/>
<dbReference type="HOGENOM" id="CLU_125406_5_3_6"/>
<dbReference type="Proteomes" id="UP000008819">
    <property type="component" value="Chromosome"/>
</dbReference>
<dbReference type="GO" id="GO:0000428">
    <property type="term" value="C:DNA-directed RNA polymerase complex"/>
    <property type="evidence" value="ECO:0007669"/>
    <property type="project" value="UniProtKB-KW"/>
</dbReference>
<dbReference type="GO" id="GO:0003677">
    <property type="term" value="F:DNA binding"/>
    <property type="evidence" value="ECO:0007669"/>
    <property type="project" value="UniProtKB-UniRule"/>
</dbReference>
<dbReference type="GO" id="GO:0003899">
    <property type="term" value="F:DNA-directed RNA polymerase activity"/>
    <property type="evidence" value="ECO:0007669"/>
    <property type="project" value="UniProtKB-UniRule"/>
</dbReference>
<dbReference type="GO" id="GO:0006351">
    <property type="term" value="P:DNA-templated transcription"/>
    <property type="evidence" value="ECO:0007669"/>
    <property type="project" value="UniProtKB-UniRule"/>
</dbReference>
<dbReference type="FunFam" id="3.90.940.10:FF:000001">
    <property type="entry name" value="DNA-directed RNA polymerase subunit omega"/>
    <property type="match status" value="1"/>
</dbReference>
<dbReference type="Gene3D" id="3.90.940.10">
    <property type="match status" value="1"/>
</dbReference>
<dbReference type="HAMAP" id="MF_00366">
    <property type="entry name" value="RNApol_bact_RpoZ"/>
    <property type="match status" value="1"/>
</dbReference>
<dbReference type="InterPro" id="IPR003716">
    <property type="entry name" value="DNA-dir_RNA_pol_omega"/>
</dbReference>
<dbReference type="InterPro" id="IPR006110">
    <property type="entry name" value="Pol_omega/Rpo6/RPB6"/>
</dbReference>
<dbReference type="InterPro" id="IPR036161">
    <property type="entry name" value="RPB6/omega-like_sf"/>
</dbReference>
<dbReference type="NCBIfam" id="TIGR00690">
    <property type="entry name" value="rpoZ"/>
    <property type="match status" value="1"/>
</dbReference>
<dbReference type="PANTHER" id="PTHR34476">
    <property type="entry name" value="DNA-DIRECTED RNA POLYMERASE SUBUNIT OMEGA"/>
    <property type="match status" value="1"/>
</dbReference>
<dbReference type="PANTHER" id="PTHR34476:SF1">
    <property type="entry name" value="DNA-DIRECTED RNA POLYMERASE SUBUNIT OMEGA"/>
    <property type="match status" value="1"/>
</dbReference>
<dbReference type="Pfam" id="PF01192">
    <property type="entry name" value="RNA_pol_Rpb6"/>
    <property type="match status" value="1"/>
</dbReference>
<dbReference type="SMART" id="SM01409">
    <property type="entry name" value="RNA_pol_Rpb6"/>
    <property type="match status" value="1"/>
</dbReference>
<dbReference type="SUPFAM" id="SSF63562">
    <property type="entry name" value="RPB6/omega subunit-like"/>
    <property type="match status" value="1"/>
</dbReference>
<proteinExistence type="inferred from homology"/>
<gene>
    <name evidence="1" type="primary">rpoZ</name>
    <name type="ordered locus">SeAg_B3958</name>
</gene>
<feature type="chain" id="PRO_1000121264" description="DNA-directed RNA polymerase subunit omega">
    <location>
        <begin position="1"/>
        <end position="91"/>
    </location>
</feature>
<protein>
    <recommendedName>
        <fullName evidence="1">DNA-directed RNA polymerase subunit omega</fullName>
        <shortName evidence="1">RNAP omega subunit</shortName>
        <ecNumber evidence="1">2.7.7.6</ecNumber>
    </recommendedName>
    <alternativeName>
        <fullName evidence="1">RNA polymerase omega subunit</fullName>
    </alternativeName>
    <alternativeName>
        <fullName evidence="1">Transcriptase subunit omega</fullName>
    </alternativeName>
</protein>
<name>RPOZ_SALA4</name>
<accession>B5EY10</accession>
<reference key="1">
    <citation type="journal article" date="2011" name="J. Bacteriol.">
        <title>Comparative genomics of 28 Salmonella enterica isolates: evidence for CRISPR-mediated adaptive sublineage evolution.</title>
        <authorList>
            <person name="Fricke W.F."/>
            <person name="Mammel M.K."/>
            <person name="McDermott P.F."/>
            <person name="Tartera C."/>
            <person name="White D.G."/>
            <person name="Leclerc J.E."/>
            <person name="Ravel J."/>
            <person name="Cebula T.A."/>
        </authorList>
    </citation>
    <scope>NUCLEOTIDE SEQUENCE [LARGE SCALE GENOMIC DNA]</scope>
    <source>
        <strain>SL483</strain>
    </source>
</reference>
<comment type="function">
    <text evidence="1">Promotes RNA polymerase assembly. Latches the N- and C-terminal regions of the beta' subunit thereby facilitating its interaction with the beta and alpha subunits.</text>
</comment>
<comment type="catalytic activity">
    <reaction evidence="1">
        <text>RNA(n) + a ribonucleoside 5'-triphosphate = RNA(n+1) + diphosphate</text>
        <dbReference type="Rhea" id="RHEA:21248"/>
        <dbReference type="Rhea" id="RHEA-COMP:14527"/>
        <dbReference type="Rhea" id="RHEA-COMP:17342"/>
        <dbReference type="ChEBI" id="CHEBI:33019"/>
        <dbReference type="ChEBI" id="CHEBI:61557"/>
        <dbReference type="ChEBI" id="CHEBI:140395"/>
        <dbReference type="EC" id="2.7.7.6"/>
    </reaction>
</comment>
<comment type="subunit">
    <text evidence="1">The RNAP catalytic core consists of 2 alpha, 1 beta, 1 beta' and 1 omega subunit. When a sigma factor is associated with the core the holoenzyme is formed, which can initiate transcription.</text>
</comment>
<comment type="similarity">
    <text evidence="1">Belongs to the RNA polymerase subunit omega family.</text>
</comment>
<evidence type="ECO:0000255" key="1">
    <source>
        <dbReference type="HAMAP-Rule" id="MF_00366"/>
    </source>
</evidence>